<protein>
    <recommendedName>
        <fullName evidence="1">Photosystem I reaction center subunit XI</fullName>
    </recommendedName>
    <alternativeName>
        <fullName evidence="1">PSI subunit V</fullName>
    </alternativeName>
    <alternativeName>
        <fullName evidence="1">PSI-L</fullName>
    </alternativeName>
</protein>
<keyword id="KW-0472">Membrane</keyword>
<keyword id="KW-0602">Photosynthesis</keyword>
<keyword id="KW-0603">Photosystem I</keyword>
<keyword id="KW-1185">Reference proteome</keyword>
<keyword id="KW-0793">Thylakoid</keyword>
<keyword id="KW-0812">Transmembrane</keyword>
<keyword id="KW-1133">Transmembrane helix</keyword>
<sequence length="156" mass="16588">MDIIGQRGDPQIGNLATPVNSSRLSLAFIRNLPAYRRGLSANRRGLEVGMAHGYFLYGPFAILGPLRNTEYASTGGLLSAVAMISILTIALSLYASVEVGKPIETLTTPDVPEDLGTSVGWGEFANGFFIGGSGGVIFAYLLCQALYFDLIQKILG</sequence>
<comment type="subcellular location">
    <subcellularLocation>
        <location evidence="1">Cellular thylakoid membrane</location>
        <topology evidence="1">Multi-pass membrane protein</topology>
    </subcellularLocation>
</comment>
<comment type="similarity">
    <text evidence="1">Belongs to the PsaL family.</text>
</comment>
<dbReference type="EMBL" id="CP000806">
    <property type="protein sequence ID" value="ACB53312.1"/>
    <property type="molecule type" value="Genomic_DNA"/>
</dbReference>
<dbReference type="RefSeq" id="WP_009547205.1">
    <property type="nucleotide sequence ID" value="NC_010546.1"/>
</dbReference>
<dbReference type="SMR" id="B1WPZ7"/>
<dbReference type="STRING" id="43989.cce_3964"/>
<dbReference type="KEGG" id="cyt:cce_3964"/>
<dbReference type="eggNOG" id="ENOG502ZMJ2">
    <property type="taxonomic scope" value="Bacteria"/>
</dbReference>
<dbReference type="HOGENOM" id="CLU_092204_1_0_3"/>
<dbReference type="OrthoDB" id="464381at2"/>
<dbReference type="Proteomes" id="UP000001203">
    <property type="component" value="Chromosome circular"/>
</dbReference>
<dbReference type="GO" id="GO:0009538">
    <property type="term" value="C:photosystem I reaction center"/>
    <property type="evidence" value="ECO:0007669"/>
    <property type="project" value="InterPro"/>
</dbReference>
<dbReference type="GO" id="GO:0031676">
    <property type="term" value="C:plasma membrane-derived thylakoid membrane"/>
    <property type="evidence" value="ECO:0007669"/>
    <property type="project" value="UniProtKB-SubCell"/>
</dbReference>
<dbReference type="GO" id="GO:0015979">
    <property type="term" value="P:photosynthesis"/>
    <property type="evidence" value="ECO:0007669"/>
    <property type="project" value="UniProtKB-UniRule"/>
</dbReference>
<dbReference type="Gene3D" id="1.20.1240.10">
    <property type="entry name" value="Photosystem I PsaL, reaction centre subunit XI"/>
    <property type="match status" value="1"/>
</dbReference>
<dbReference type="HAMAP" id="MF_00447">
    <property type="entry name" value="PSI_PsaL"/>
    <property type="match status" value="1"/>
</dbReference>
<dbReference type="InterPro" id="IPR003757">
    <property type="entry name" value="PSI_PsaL"/>
</dbReference>
<dbReference type="InterPro" id="IPR036592">
    <property type="entry name" value="PSI_PsaL_sf"/>
</dbReference>
<dbReference type="InterPro" id="IPR022980">
    <property type="entry name" value="PSI_suXI"/>
</dbReference>
<dbReference type="PANTHER" id="PTHR34803">
    <property type="entry name" value="PHOTOSYSTEM I REACTION CENTER SUBUNIT XI, CHLOROPLASTIC"/>
    <property type="match status" value="1"/>
</dbReference>
<dbReference type="PANTHER" id="PTHR34803:SF2">
    <property type="entry name" value="PHOTOSYSTEM I REACTION CENTER SUBUNIT XI, CHLOROPLASTIC"/>
    <property type="match status" value="1"/>
</dbReference>
<dbReference type="Pfam" id="PF02605">
    <property type="entry name" value="PsaL"/>
    <property type="match status" value="1"/>
</dbReference>
<dbReference type="SUPFAM" id="SSF81568">
    <property type="entry name" value="Photosystem I reaction center subunit XI, PsaL"/>
    <property type="match status" value="1"/>
</dbReference>
<feature type="chain" id="PRO_1000135234" description="Photosystem I reaction center subunit XI">
    <location>
        <begin position="1"/>
        <end position="156"/>
    </location>
</feature>
<feature type="transmembrane region" description="Helical" evidence="1">
    <location>
        <begin position="75"/>
        <end position="95"/>
    </location>
</feature>
<feature type="transmembrane region" description="Helical" evidence="1">
    <location>
        <begin position="128"/>
        <end position="148"/>
    </location>
</feature>
<organism>
    <name type="scientific">Crocosphaera subtropica (strain ATCC 51142 / BH68)</name>
    <name type="common">Cyanothece sp. (strain ATCC 51142)</name>
    <dbReference type="NCBI Taxonomy" id="43989"/>
    <lineage>
        <taxon>Bacteria</taxon>
        <taxon>Bacillati</taxon>
        <taxon>Cyanobacteriota</taxon>
        <taxon>Cyanophyceae</taxon>
        <taxon>Oscillatoriophycideae</taxon>
        <taxon>Chroococcales</taxon>
        <taxon>Aphanothecaceae</taxon>
        <taxon>Crocosphaera</taxon>
        <taxon>Crocosphaera subtropica</taxon>
    </lineage>
</organism>
<reference key="1">
    <citation type="journal article" date="2008" name="Proc. Natl. Acad. Sci. U.S.A.">
        <title>The genome of Cyanothece 51142, a unicellular diazotrophic cyanobacterium important in the marine nitrogen cycle.</title>
        <authorList>
            <person name="Welsh E.A."/>
            <person name="Liberton M."/>
            <person name="Stoeckel J."/>
            <person name="Loh T."/>
            <person name="Elvitigala T."/>
            <person name="Wang C."/>
            <person name="Wollam A."/>
            <person name="Fulton R.S."/>
            <person name="Clifton S.W."/>
            <person name="Jacobs J.M."/>
            <person name="Aurora R."/>
            <person name="Ghosh B.K."/>
            <person name="Sherman L.A."/>
            <person name="Smith R.D."/>
            <person name="Wilson R.K."/>
            <person name="Pakrasi H.B."/>
        </authorList>
    </citation>
    <scope>NUCLEOTIDE SEQUENCE [LARGE SCALE GENOMIC DNA]</scope>
    <source>
        <strain>ATCC 51142 / BH68</strain>
    </source>
</reference>
<proteinExistence type="inferred from homology"/>
<evidence type="ECO:0000255" key="1">
    <source>
        <dbReference type="HAMAP-Rule" id="MF_00447"/>
    </source>
</evidence>
<accession>B1WPZ7</accession>
<name>PSAL_CROS5</name>
<gene>
    <name evidence="1" type="primary">psaL</name>
    <name type="ordered locus">cce_3964</name>
</gene>